<proteinExistence type="inferred from homology"/>
<gene>
    <name evidence="1" type="primary">cca</name>
    <name type="ordered locus">SeSA_A3394</name>
</gene>
<accession>B4TVT8</accession>
<name>CCA_SALSV</name>
<reference key="1">
    <citation type="journal article" date="2011" name="J. Bacteriol.">
        <title>Comparative genomics of 28 Salmonella enterica isolates: evidence for CRISPR-mediated adaptive sublineage evolution.</title>
        <authorList>
            <person name="Fricke W.F."/>
            <person name="Mammel M.K."/>
            <person name="McDermott P.F."/>
            <person name="Tartera C."/>
            <person name="White D.G."/>
            <person name="Leclerc J.E."/>
            <person name="Ravel J."/>
            <person name="Cebula T.A."/>
        </authorList>
    </citation>
    <scope>NUCLEOTIDE SEQUENCE [LARGE SCALE GENOMIC DNA]</scope>
    <source>
        <strain>CVM19633</strain>
    </source>
</reference>
<protein>
    <recommendedName>
        <fullName evidence="1">Multifunctional CCA protein</fullName>
    </recommendedName>
    <domain>
        <recommendedName>
            <fullName evidence="1">CCA-adding enzyme</fullName>
            <ecNumber evidence="1">2.7.7.72</ecNumber>
        </recommendedName>
        <alternativeName>
            <fullName evidence="1">CCA tRNA nucleotidyltransferase</fullName>
        </alternativeName>
        <alternativeName>
            <fullName evidence="1">tRNA CCA-pyrophosphorylase</fullName>
        </alternativeName>
        <alternativeName>
            <fullName evidence="1">tRNA adenylyl-/cytidylyl-transferase</fullName>
        </alternativeName>
        <alternativeName>
            <fullName evidence="1">tRNA nucleotidyltransferase</fullName>
        </alternativeName>
        <alternativeName>
            <fullName evidence="1">tRNA-NT</fullName>
        </alternativeName>
    </domain>
    <domain>
        <recommendedName>
            <fullName evidence="1">2'-nucleotidase</fullName>
            <ecNumber evidence="1">3.1.3.-</ecNumber>
        </recommendedName>
    </domain>
    <domain>
        <recommendedName>
            <fullName evidence="1">2',3'-cyclic phosphodiesterase</fullName>
            <ecNumber evidence="1">3.1.4.-</ecNumber>
        </recommendedName>
    </domain>
    <domain>
        <recommendedName>
            <fullName evidence="1">Phosphatase</fullName>
            <ecNumber evidence="1">3.1.3.-</ecNumber>
        </recommendedName>
    </domain>
</protein>
<sequence>MKIYLVGGAVRDALLGLPVKDKDWVVVGATPQEMLDAGYQQVGRDFPVFLHPQTHEEYALARTERKSGSGYTGFTCYAAPDVTLEADLQRRDLTINALARDDDGQIIDPYHGRRDLEARLLRHVSPAFGEDPLRVLRVARFAARYAHLSFRIADETLSLMRDMTAAGELEHLTPERVWKETENALTTRNPQVYFQVLRDCGALRVLFPEIDALFGVPAPAKWHPEIDTGVHTLMTLSMAAMLSPQLDVRFATLCHDLGKGLTPKNLWPRHHGHGPAGVKLVEQLCQRLRVPNDLRDLAKLVAEYHDLIHTFPILQPKTIVKLFDAIDAWRKPQRVEQIALTSEADVRGRTGFEASDYPQGRWLREAWQVAQAVSTKEVVEAGFKGIEIREELTKRRIAAVANWKEKRCPNPAS</sequence>
<feature type="chain" id="PRO_1000140052" description="Multifunctional CCA protein">
    <location>
        <begin position="1"/>
        <end position="413"/>
    </location>
</feature>
<feature type="domain" description="HD" evidence="1">
    <location>
        <begin position="228"/>
        <end position="329"/>
    </location>
</feature>
<feature type="binding site" evidence="1">
    <location>
        <position position="8"/>
    </location>
    <ligand>
        <name>ATP</name>
        <dbReference type="ChEBI" id="CHEBI:30616"/>
    </ligand>
</feature>
<feature type="binding site" evidence="1">
    <location>
        <position position="8"/>
    </location>
    <ligand>
        <name>CTP</name>
        <dbReference type="ChEBI" id="CHEBI:37563"/>
    </ligand>
</feature>
<feature type="binding site" evidence="1">
    <location>
        <position position="11"/>
    </location>
    <ligand>
        <name>ATP</name>
        <dbReference type="ChEBI" id="CHEBI:30616"/>
    </ligand>
</feature>
<feature type="binding site" evidence="1">
    <location>
        <position position="11"/>
    </location>
    <ligand>
        <name>CTP</name>
        <dbReference type="ChEBI" id="CHEBI:37563"/>
    </ligand>
</feature>
<feature type="binding site" evidence="1">
    <location>
        <position position="21"/>
    </location>
    <ligand>
        <name>Mg(2+)</name>
        <dbReference type="ChEBI" id="CHEBI:18420"/>
    </ligand>
</feature>
<feature type="binding site" evidence="1">
    <location>
        <position position="23"/>
    </location>
    <ligand>
        <name>Mg(2+)</name>
        <dbReference type="ChEBI" id="CHEBI:18420"/>
    </ligand>
</feature>
<feature type="binding site" evidence="1">
    <location>
        <position position="91"/>
    </location>
    <ligand>
        <name>ATP</name>
        <dbReference type="ChEBI" id="CHEBI:30616"/>
    </ligand>
</feature>
<feature type="binding site" evidence="1">
    <location>
        <position position="91"/>
    </location>
    <ligand>
        <name>CTP</name>
        <dbReference type="ChEBI" id="CHEBI:37563"/>
    </ligand>
</feature>
<feature type="binding site" evidence="1">
    <location>
        <position position="137"/>
    </location>
    <ligand>
        <name>ATP</name>
        <dbReference type="ChEBI" id="CHEBI:30616"/>
    </ligand>
</feature>
<feature type="binding site" evidence="1">
    <location>
        <position position="137"/>
    </location>
    <ligand>
        <name>CTP</name>
        <dbReference type="ChEBI" id="CHEBI:37563"/>
    </ligand>
</feature>
<feature type="binding site" evidence="1">
    <location>
        <position position="140"/>
    </location>
    <ligand>
        <name>ATP</name>
        <dbReference type="ChEBI" id="CHEBI:30616"/>
    </ligand>
</feature>
<feature type="binding site" evidence="1">
    <location>
        <position position="140"/>
    </location>
    <ligand>
        <name>CTP</name>
        <dbReference type="ChEBI" id="CHEBI:37563"/>
    </ligand>
</feature>
<comment type="function">
    <text evidence="1">Catalyzes the addition and repair of the essential 3'-terminal CCA sequence in tRNAs without using a nucleic acid template. Adds these three nucleotides in the order of C, C, and A to the tRNA nucleotide-73, using CTP and ATP as substrates and producing inorganic pyrophosphate. tRNA 3'-terminal CCA addition is required both for tRNA processing and repair. Also involved in tRNA surveillance by mediating tandem CCA addition to generate a CCACCA at the 3' terminus of unstable tRNAs. While stable tRNAs receive only 3'-terminal CCA, unstable tRNAs are marked with CCACCA and rapidly degraded.</text>
</comment>
<comment type="catalytic activity">
    <reaction evidence="1">
        <text>a tRNA precursor + 2 CTP + ATP = a tRNA with a 3' CCA end + 3 diphosphate</text>
        <dbReference type="Rhea" id="RHEA:14433"/>
        <dbReference type="Rhea" id="RHEA-COMP:10465"/>
        <dbReference type="Rhea" id="RHEA-COMP:10468"/>
        <dbReference type="ChEBI" id="CHEBI:30616"/>
        <dbReference type="ChEBI" id="CHEBI:33019"/>
        <dbReference type="ChEBI" id="CHEBI:37563"/>
        <dbReference type="ChEBI" id="CHEBI:74896"/>
        <dbReference type="ChEBI" id="CHEBI:83071"/>
        <dbReference type="EC" id="2.7.7.72"/>
    </reaction>
</comment>
<comment type="catalytic activity">
    <reaction evidence="1">
        <text>a tRNA with a 3' CCA end + 2 CTP + ATP = a tRNA with a 3' CCACCA end + 3 diphosphate</text>
        <dbReference type="Rhea" id="RHEA:76235"/>
        <dbReference type="Rhea" id="RHEA-COMP:10468"/>
        <dbReference type="Rhea" id="RHEA-COMP:18655"/>
        <dbReference type="ChEBI" id="CHEBI:30616"/>
        <dbReference type="ChEBI" id="CHEBI:33019"/>
        <dbReference type="ChEBI" id="CHEBI:37563"/>
        <dbReference type="ChEBI" id="CHEBI:83071"/>
        <dbReference type="ChEBI" id="CHEBI:195187"/>
    </reaction>
    <physiologicalReaction direction="left-to-right" evidence="1">
        <dbReference type="Rhea" id="RHEA:76236"/>
    </physiologicalReaction>
</comment>
<comment type="cofactor">
    <cofactor evidence="1">
        <name>Mg(2+)</name>
        <dbReference type="ChEBI" id="CHEBI:18420"/>
    </cofactor>
    <text evidence="1">Magnesium is required for nucleotidyltransferase activity.</text>
</comment>
<comment type="cofactor">
    <cofactor evidence="1">
        <name>Ni(2+)</name>
        <dbReference type="ChEBI" id="CHEBI:49786"/>
    </cofactor>
    <text evidence="1">Nickel for phosphatase activity.</text>
</comment>
<comment type="subunit">
    <text evidence="1">Monomer. Can also form homodimers and oligomers.</text>
</comment>
<comment type="domain">
    <text evidence="1">Comprises two domains: an N-terminal domain containing the nucleotidyltransferase activity and a C-terminal HD domain associated with both phosphodiesterase and phosphatase activities.</text>
</comment>
<comment type="miscellaneous">
    <text evidence="1">A single active site specifically recognizes both ATP and CTP and is responsible for their addition.</text>
</comment>
<comment type="similarity">
    <text evidence="1">Belongs to the tRNA nucleotidyltransferase/poly(A) polymerase family. Bacterial CCA-adding enzyme type 1 subfamily.</text>
</comment>
<dbReference type="EC" id="2.7.7.72" evidence="1"/>
<dbReference type="EC" id="3.1.3.-" evidence="1"/>
<dbReference type="EC" id="3.1.4.-" evidence="1"/>
<dbReference type="EMBL" id="CP001127">
    <property type="protein sequence ID" value="ACF91530.1"/>
    <property type="molecule type" value="Genomic_DNA"/>
</dbReference>
<dbReference type="RefSeq" id="WP_000708456.1">
    <property type="nucleotide sequence ID" value="NC_011094.1"/>
</dbReference>
<dbReference type="SMR" id="B4TVT8"/>
<dbReference type="KEGG" id="sew:SeSA_A3394"/>
<dbReference type="HOGENOM" id="CLU_015961_1_1_6"/>
<dbReference type="Proteomes" id="UP000001865">
    <property type="component" value="Chromosome"/>
</dbReference>
<dbReference type="GO" id="GO:0005524">
    <property type="term" value="F:ATP binding"/>
    <property type="evidence" value="ECO:0007669"/>
    <property type="project" value="UniProtKB-UniRule"/>
</dbReference>
<dbReference type="GO" id="GO:0004810">
    <property type="term" value="F:CCA tRNA nucleotidyltransferase activity"/>
    <property type="evidence" value="ECO:0007669"/>
    <property type="project" value="UniProtKB-UniRule"/>
</dbReference>
<dbReference type="GO" id="GO:0004112">
    <property type="term" value="F:cyclic-nucleotide phosphodiesterase activity"/>
    <property type="evidence" value="ECO:0007669"/>
    <property type="project" value="UniProtKB-UniRule"/>
</dbReference>
<dbReference type="GO" id="GO:0000287">
    <property type="term" value="F:magnesium ion binding"/>
    <property type="evidence" value="ECO:0007669"/>
    <property type="project" value="UniProtKB-UniRule"/>
</dbReference>
<dbReference type="GO" id="GO:0016791">
    <property type="term" value="F:phosphatase activity"/>
    <property type="evidence" value="ECO:0007669"/>
    <property type="project" value="UniProtKB-UniRule"/>
</dbReference>
<dbReference type="GO" id="GO:0000049">
    <property type="term" value="F:tRNA binding"/>
    <property type="evidence" value="ECO:0007669"/>
    <property type="project" value="UniProtKB-UniRule"/>
</dbReference>
<dbReference type="GO" id="GO:0042245">
    <property type="term" value="P:RNA repair"/>
    <property type="evidence" value="ECO:0007669"/>
    <property type="project" value="UniProtKB-KW"/>
</dbReference>
<dbReference type="GO" id="GO:0001680">
    <property type="term" value="P:tRNA 3'-terminal CCA addition"/>
    <property type="evidence" value="ECO:0007669"/>
    <property type="project" value="UniProtKB-UniRule"/>
</dbReference>
<dbReference type="CDD" id="cd00077">
    <property type="entry name" value="HDc"/>
    <property type="match status" value="1"/>
</dbReference>
<dbReference type="CDD" id="cd05398">
    <property type="entry name" value="NT_ClassII-CCAase"/>
    <property type="match status" value="1"/>
</dbReference>
<dbReference type="FunFam" id="1.10.3090.10:FF:000001">
    <property type="entry name" value="Multifunctional CCA protein"/>
    <property type="match status" value="1"/>
</dbReference>
<dbReference type="FunFam" id="3.30.460.10:FF:000016">
    <property type="entry name" value="Multifunctional CCA protein"/>
    <property type="match status" value="1"/>
</dbReference>
<dbReference type="Gene3D" id="3.30.460.10">
    <property type="entry name" value="Beta Polymerase, domain 2"/>
    <property type="match status" value="1"/>
</dbReference>
<dbReference type="Gene3D" id="1.10.3090.10">
    <property type="entry name" value="cca-adding enzyme, domain 2"/>
    <property type="match status" value="1"/>
</dbReference>
<dbReference type="HAMAP" id="MF_01261">
    <property type="entry name" value="CCA_bact_type1"/>
    <property type="match status" value="1"/>
</dbReference>
<dbReference type="HAMAP" id="MF_01262">
    <property type="entry name" value="CCA_bact_type2"/>
    <property type="match status" value="1"/>
</dbReference>
<dbReference type="InterPro" id="IPR012006">
    <property type="entry name" value="CCA_bact"/>
</dbReference>
<dbReference type="InterPro" id="IPR003607">
    <property type="entry name" value="HD/PDEase_dom"/>
</dbReference>
<dbReference type="InterPro" id="IPR006674">
    <property type="entry name" value="HD_domain"/>
</dbReference>
<dbReference type="InterPro" id="IPR043519">
    <property type="entry name" value="NT_sf"/>
</dbReference>
<dbReference type="InterPro" id="IPR002646">
    <property type="entry name" value="PolA_pol_head_dom"/>
</dbReference>
<dbReference type="InterPro" id="IPR032828">
    <property type="entry name" value="PolyA_RNA-bd"/>
</dbReference>
<dbReference type="InterPro" id="IPR050124">
    <property type="entry name" value="tRNA_CCA-adding_enzyme"/>
</dbReference>
<dbReference type="NCBIfam" id="NF008137">
    <property type="entry name" value="PRK10885.1"/>
    <property type="match status" value="1"/>
</dbReference>
<dbReference type="PANTHER" id="PTHR47545">
    <property type="entry name" value="MULTIFUNCTIONAL CCA PROTEIN"/>
    <property type="match status" value="1"/>
</dbReference>
<dbReference type="PANTHER" id="PTHR47545:SF1">
    <property type="entry name" value="MULTIFUNCTIONAL CCA PROTEIN"/>
    <property type="match status" value="1"/>
</dbReference>
<dbReference type="Pfam" id="PF01966">
    <property type="entry name" value="HD"/>
    <property type="match status" value="1"/>
</dbReference>
<dbReference type="Pfam" id="PF01743">
    <property type="entry name" value="PolyA_pol"/>
    <property type="match status" value="1"/>
</dbReference>
<dbReference type="Pfam" id="PF12627">
    <property type="entry name" value="PolyA_pol_RNAbd"/>
    <property type="match status" value="1"/>
</dbReference>
<dbReference type="PIRSF" id="PIRSF000813">
    <property type="entry name" value="CCA_bact"/>
    <property type="match status" value="1"/>
</dbReference>
<dbReference type="SMART" id="SM00471">
    <property type="entry name" value="HDc"/>
    <property type="match status" value="1"/>
</dbReference>
<dbReference type="SUPFAM" id="SSF81301">
    <property type="entry name" value="Nucleotidyltransferase"/>
    <property type="match status" value="1"/>
</dbReference>
<dbReference type="SUPFAM" id="SSF81891">
    <property type="entry name" value="Poly A polymerase C-terminal region-like"/>
    <property type="match status" value="1"/>
</dbReference>
<dbReference type="PROSITE" id="PS51831">
    <property type="entry name" value="HD"/>
    <property type="match status" value="1"/>
</dbReference>
<keyword id="KW-0067">ATP-binding</keyword>
<keyword id="KW-0378">Hydrolase</keyword>
<keyword id="KW-0460">Magnesium</keyword>
<keyword id="KW-0479">Metal-binding</keyword>
<keyword id="KW-0511">Multifunctional enzyme</keyword>
<keyword id="KW-0533">Nickel</keyword>
<keyword id="KW-0547">Nucleotide-binding</keyword>
<keyword id="KW-0548">Nucleotidyltransferase</keyword>
<keyword id="KW-0692">RNA repair</keyword>
<keyword id="KW-0694">RNA-binding</keyword>
<keyword id="KW-0808">Transferase</keyword>
<keyword id="KW-0819">tRNA processing</keyword>
<organism>
    <name type="scientific">Salmonella schwarzengrund (strain CVM19633)</name>
    <dbReference type="NCBI Taxonomy" id="439843"/>
    <lineage>
        <taxon>Bacteria</taxon>
        <taxon>Pseudomonadati</taxon>
        <taxon>Pseudomonadota</taxon>
        <taxon>Gammaproteobacteria</taxon>
        <taxon>Enterobacterales</taxon>
        <taxon>Enterobacteriaceae</taxon>
        <taxon>Salmonella</taxon>
    </lineage>
</organism>
<evidence type="ECO:0000255" key="1">
    <source>
        <dbReference type="HAMAP-Rule" id="MF_01261"/>
    </source>
</evidence>